<proteinExistence type="inferred from homology"/>
<keyword id="KW-1185">Reference proteome</keyword>
<dbReference type="EMBL" id="AE015927">
    <property type="protein sequence ID" value="AAO36320.1"/>
    <property type="status" value="ALT_INIT"/>
    <property type="molecule type" value="Genomic_DNA"/>
</dbReference>
<dbReference type="RefSeq" id="WP_035109370.1">
    <property type="nucleotide sequence ID" value="NC_004557.1"/>
</dbReference>
<dbReference type="SMR" id="Q893M2"/>
<dbReference type="STRING" id="212717.CTC_01794"/>
<dbReference type="GeneID" id="24253220"/>
<dbReference type="KEGG" id="ctc:CTC_01794"/>
<dbReference type="HOGENOM" id="CLU_036813_1_0_9"/>
<dbReference type="OrthoDB" id="9776369at2"/>
<dbReference type="Proteomes" id="UP000001412">
    <property type="component" value="Chromosome"/>
</dbReference>
<dbReference type="CDD" id="cd15488">
    <property type="entry name" value="Tm-1-like"/>
    <property type="match status" value="1"/>
</dbReference>
<dbReference type="Gene3D" id="3.40.50.12030">
    <property type="entry name" value="Uncharacterised protein family UPF0261, NC domain"/>
    <property type="match status" value="1"/>
</dbReference>
<dbReference type="Gene3D" id="3.40.50.12020">
    <property type="entry name" value="Uncharacterised protein family UPF0261, NN domain"/>
    <property type="match status" value="1"/>
</dbReference>
<dbReference type="HAMAP" id="MF_00677">
    <property type="entry name" value="UPF0261"/>
    <property type="match status" value="1"/>
</dbReference>
<dbReference type="InterPro" id="IPR051353">
    <property type="entry name" value="Tobamovirus_resist_UPF0261"/>
</dbReference>
<dbReference type="InterPro" id="IPR008322">
    <property type="entry name" value="UPF0261"/>
</dbReference>
<dbReference type="InterPro" id="IPR056778">
    <property type="entry name" value="UPF0261_C"/>
</dbReference>
<dbReference type="InterPro" id="IPR044122">
    <property type="entry name" value="UPF0261_N"/>
</dbReference>
<dbReference type="NCBIfam" id="NF002674">
    <property type="entry name" value="PRK02399.1-2"/>
    <property type="match status" value="1"/>
</dbReference>
<dbReference type="PANTHER" id="PTHR31862">
    <property type="entry name" value="UPF0261 DOMAIN PROTEIN (AFU_ORTHOLOGUE AFUA_1G10120)"/>
    <property type="match status" value="1"/>
</dbReference>
<dbReference type="PANTHER" id="PTHR31862:SF1">
    <property type="entry name" value="UPF0261 DOMAIN PROTEIN (AFU_ORTHOLOGUE AFUA_1G10120)"/>
    <property type="match status" value="1"/>
</dbReference>
<dbReference type="Pfam" id="PF06792">
    <property type="entry name" value="UPF0261"/>
    <property type="match status" value="1"/>
</dbReference>
<dbReference type="Pfam" id="PF23189">
    <property type="entry name" value="UPF0261_C"/>
    <property type="match status" value="1"/>
</dbReference>
<dbReference type="PIRSF" id="PIRSF033271">
    <property type="entry name" value="UCP033271"/>
    <property type="match status" value="1"/>
</dbReference>
<comment type="similarity">
    <text evidence="1">Belongs to the UPF0261 family.</text>
</comment>
<comment type="sequence caution" evidence="2">
    <conflict type="erroneous initiation">
        <sequence resource="EMBL-CDS" id="AAO36320"/>
    </conflict>
</comment>
<feature type="chain" id="PRO_0000220211" description="UPF0261 protein CTC_01794">
    <location>
        <begin position="1"/>
        <end position="404"/>
    </location>
</feature>
<gene>
    <name type="ordered locus">CTC_01794</name>
</gene>
<accession>Q893M2</accession>
<sequence length="404" mass="43713">MNKKIIILGTLDTKGEEFKFIKDIIEKEGLETIVIDVGVVGEAKLRPNIDKKEVAIVGGSSIEDLIKKKDRGYAMEVMMKGSAAIVKRLSKEEGISGIISLGGSGGTSIASYAMRALEVGIPKVMVSTLASGDTRPYVGEKDITMIYSVVDISGINTLSSKILSNAAYALIGMVKGKAPELKGEKPLIGATMFGVTTKGVNIAKEYLENNGYEVLVFHATGAGGRAMEDLIRSGYIKGVLDMTTTEWCDEVVGGVLNAGPNRLEAASDMGIPQVVAPGALDMVNFGPIETVPEEFKKRNLYKHNATVTLMRTTKEENIEIGKVIGEKLNRAKKDTALFIPLKGVSAIDAEGEVFYGYEEDKALFNTLKETVNKDKVQIVEMNNNINDEEFAIAMAKKLINMMEK</sequence>
<organism>
    <name type="scientific">Clostridium tetani (strain Massachusetts / E88)</name>
    <dbReference type="NCBI Taxonomy" id="212717"/>
    <lineage>
        <taxon>Bacteria</taxon>
        <taxon>Bacillati</taxon>
        <taxon>Bacillota</taxon>
        <taxon>Clostridia</taxon>
        <taxon>Eubacteriales</taxon>
        <taxon>Clostridiaceae</taxon>
        <taxon>Clostridium</taxon>
    </lineage>
</organism>
<evidence type="ECO:0000255" key="1">
    <source>
        <dbReference type="HAMAP-Rule" id="MF_00677"/>
    </source>
</evidence>
<evidence type="ECO:0000305" key="2"/>
<protein>
    <recommendedName>
        <fullName evidence="1">UPF0261 protein CTC_01794</fullName>
    </recommendedName>
</protein>
<name>Y1794_CLOTE</name>
<reference key="1">
    <citation type="journal article" date="2003" name="Proc. Natl. Acad. Sci. U.S.A.">
        <title>The genome sequence of Clostridium tetani, the causative agent of tetanus disease.</title>
        <authorList>
            <person name="Brueggemann H."/>
            <person name="Baeumer S."/>
            <person name="Fricke W.F."/>
            <person name="Wiezer A."/>
            <person name="Liesegang H."/>
            <person name="Decker I."/>
            <person name="Herzberg C."/>
            <person name="Martinez-Arias R."/>
            <person name="Merkl R."/>
            <person name="Henne A."/>
            <person name="Gottschalk G."/>
        </authorList>
    </citation>
    <scope>NUCLEOTIDE SEQUENCE [LARGE SCALE GENOMIC DNA]</scope>
    <source>
        <strain>Massachusetts / E88</strain>
    </source>
</reference>